<feature type="chain" id="PRO_0000434889" description="Delta(9) fatty acid conjugase-like enzyme">
    <location>
        <begin position="1"/>
        <end position="375"/>
    </location>
</feature>
<feature type="transmembrane region" description="Helical" evidence="1">
    <location>
        <begin position="38"/>
        <end position="58"/>
    </location>
</feature>
<feature type="transmembrane region" description="Helical" evidence="1">
    <location>
        <begin position="66"/>
        <end position="86"/>
    </location>
</feature>
<feature type="transmembrane region" description="Helical" evidence="1">
    <location>
        <begin position="168"/>
        <end position="188"/>
    </location>
</feature>
<feature type="transmembrane region" description="Helical" evidence="1">
    <location>
        <begin position="219"/>
        <end position="239"/>
    </location>
</feature>
<feature type="transmembrane region" description="Helical" evidence="1">
    <location>
        <begin position="241"/>
        <end position="261"/>
    </location>
</feature>
<feature type="short sequence motif" description="Histidine box-1" evidence="4">
    <location>
        <begin position="94"/>
        <end position="98"/>
    </location>
</feature>
<feature type="short sequence motif" description="Histidine box-2" evidence="4">
    <location>
        <begin position="130"/>
        <end position="134"/>
    </location>
</feature>
<feature type="short sequence motif" description="Histidine box-3" evidence="4">
    <location>
        <begin position="307"/>
        <end position="311"/>
    </location>
</feature>
<dbReference type="EC" id="1.14.19.-" evidence="4"/>
<dbReference type="EMBL" id="AY494985">
    <property type="protein sequence ID" value="AAS72901.1"/>
    <property type="molecule type" value="mRNA"/>
</dbReference>
<dbReference type="BRENDA" id="1.14.19.34">
    <property type="organism ID" value="14177"/>
</dbReference>
<dbReference type="GO" id="GO:0016020">
    <property type="term" value="C:membrane"/>
    <property type="evidence" value="ECO:0007669"/>
    <property type="project" value="UniProtKB-SubCell"/>
</dbReference>
<dbReference type="GO" id="GO:0016491">
    <property type="term" value="F:oxidoreductase activity"/>
    <property type="evidence" value="ECO:0007669"/>
    <property type="project" value="UniProtKB-KW"/>
</dbReference>
<dbReference type="GO" id="GO:0006633">
    <property type="term" value="P:fatty acid biosynthetic process"/>
    <property type="evidence" value="ECO:0007669"/>
    <property type="project" value="UniProtKB-KW"/>
</dbReference>
<dbReference type="CDD" id="cd03507">
    <property type="entry name" value="Delta12-FADS-like"/>
    <property type="match status" value="1"/>
</dbReference>
<dbReference type="InterPro" id="IPR005804">
    <property type="entry name" value="FA_desaturase_dom"/>
</dbReference>
<dbReference type="InterPro" id="IPR012171">
    <property type="entry name" value="Fatty_acid_desaturase"/>
</dbReference>
<dbReference type="PANTHER" id="PTHR32100">
    <property type="entry name" value="OMEGA-6 FATTY ACID DESATURASE, CHLOROPLASTIC"/>
    <property type="match status" value="1"/>
</dbReference>
<dbReference type="Pfam" id="PF00487">
    <property type="entry name" value="FA_desaturase"/>
    <property type="match status" value="1"/>
</dbReference>
<reference key="1">
    <citation type="journal article" date="2004" name="J. Biol. Chem.">
        <title>Dimorphecolic acid is synthesized by the coordinate activities of two divergent Delta12-oleic acid desaturases.</title>
        <authorList>
            <person name="Cahoon E.B."/>
            <person name="Kinney A.J."/>
        </authorList>
    </citation>
    <scope>NUCLEOTIDE SEQUENCE [MRNA]</scope>
    <scope>FUNCTION</scope>
</reference>
<name>FAD22_DIMSI</name>
<proteinExistence type="evidence at transcript level"/>
<organism>
    <name type="scientific">Dimorphotheca sinuata</name>
    <name type="common">African daisy</name>
    <dbReference type="NCBI Taxonomy" id="112408"/>
    <lineage>
        <taxon>Eukaryota</taxon>
        <taxon>Viridiplantae</taxon>
        <taxon>Streptophyta</taxon>
        <taxon>Embryophyta</taxon>
        <taxon>Tracheophyta</taxon>
        <taxon>Spermatophyta</taxon>
        <taxon>Magnoliopsida</taxon>
        <taxon>eudicotyledons</taxon>
        <taxon>Gunneridae</taxon>
        <taxon>Pentapetalae</taxon>
        <taxon>asterids</taxon>
        <taxon>campanulids</taxon>
        <taxon>Asterales</taxon>
        <taxon>Asteraceae</taxon>
        <taxon>Asteroideae</taxon>
        <taxon>Calenduleae</taxon>
        <taxon>Dimorphotheca</taxon>
    </lineage>
</organism>
<keyword id="KW-0275">Fatty acid biosynthesis</keyword>
<keyword id="KW-0276">Fatty acid metabolism</keyword>
<keyword id="KW-0444">Lipid biosynthesis</keyword>
<keyword id="KW-0443">Lipid metabolism</keyword>
<keyword id="KW-0472">Membrane</keyword>
<keyword id="KW-0560">Oxidoreductase</keyword>
<keyword id="KW-0812">Transmembrane</keyword>
<keyword id="KW-1133">Transmembrane helix</keyword>
<accession>Q6RS96</accession>
<protein>
    <recommendedName>
        <fullName evidence="4">Delta(9) fatty acid conjugase-like enzyme</fullName>
    </recommendedName>
    <alternativeName>
        <fullName evidence="3">Fatty acid desaturase 2-2</fullName>
        <shortName evidence="3">DsFAD2-2</shortName>
        <ecNumber evidence="4">1.14.19.-</ecNumber>
    </alternativeName>
</protein>
<evidence type="ECO:0000255" key="1"/>
<evidence type="ECO:0000269" key="2">
    <source>
    </source>
</evidence>
<evidence type="ECO:0000303" key="3">
    <source>
    </source>
</evidence>
<evidence type="ECO:0000305" key="4"/>
<comment type="function">
    <text evidence="2">Involved in the biosynthesis of dimorphecolic acid (9-OH-18:2(10E,12E)). Catalyzes the formation of the C-9 hydroxyl group and the (E)-delta(10) double bond from the trans-linoleic acid (16:2(9Z,12E)) produced by FAD2-1. Very limited activity with cis-linoleic acid (16:2(9Z,12Z)).</text>
</comment>
<comment type="subcellular location">
    <subcellularLocation>
        <location evidence="1">Membrane</location>
        <topology evidence="1">Multi-pass membrane protein</topology>
    </subcellularLocation>
</comment>
<comment type="similarity">
    <text evidence="4">Belongs to the fatty acid desaturase type 1 family.</text>
</comment>
<sequence length="375" mass="43887">MGASEEMKVLERVPVSKPPFEYNDLKKAVPPHCFTRSLSLSFYYLFYDLIKVCILFYVASKYIPMLPYSLSCIVWPLYWFFQGAFLGRLWMIGHECGHHSFSNYRWLDDTVGFLVHTATLTPYFSFKYSHRNHHAHTNSLEYDEVHVPKIRKFKSEHLYSEFLTNNPFGLVVNMVFELTFGYPSYLIFNYSGRKLTQAGFASHLYPQSPIFNDSERNHVFFSDVGICIVLYALYRIAIAKGAMLVLYVYGLPWVVMSAFIFSLTYLQHTHPSIPHYDSTEWNWLRGALSSIDRELAGAFNIKKTHYHVVHHLFPFIPEYHAHDATEALKPILGPYYKYDGTPFYKALWREMKDCLYVESDDGPNKTGVYWFKTKT</sequence>